<reference key="1">
    <citation type="journal article" date="2004" name="Nat. Biotechnol.">
        <title>The genome sequence of the extreme thermophile Thermus thermophilus.</title>
        <authorList>
            <person name="Henne A."/>
            <person name="Brueggemann H."/>
            <person name="Raasch C."/>
            <person name="Wiezer A."/>
            <person name="Hartsch T."/>
            <person name="Liesegang H."/>
            <person name="Johann A."/>
            <person name="Lienard T."/>
            <person name="Gohl O."/>
            <person name="Martinez-Arias R."/>
            <person name="Jacobi C."/>
            <person name="Starkuviene V."/>
            <person name="Schlenczeck S."/>
            <person name="Dencker S."/>
            <person name="Huber R."/>
            <person name="Klenk H.-P."/>
            <person name="Kramer W."/>
            <person name="Merkl R."/>
            <person name="Gottschalk G."/>
            <person name="Fritz H.-J."/>
        </authorList>
    </citation>
    <scope>NUCLEOTIDE SEQUENCE [LARGE SCALE GENOMIC DNA]</scope>
    <source>
        <strain>ATCC BAA-163 / DSM 7039 / HB27</strain>
    </source>
</reference>
<sequence>MTARAVRGTKDLFGKELRMHQRIVATARKVLEAAGALELVTPIFEETQVFEKGVGAATDIVRKEMFTFQDRGGRSLTLRPEGTAAMVRAYLEHGMKVWPQPVRLWMAGPMFRAERPQKGRYRQFHQVNYEALGSENPILDAEAVVLLYECLKELGLRRLKVKLSSVGDPEDRARYNAYLREVLSPHREALSEDSKERLELNPMRILDSKSERDQALLKELGVRPMLDFLGEEARAHLKEVERHLERLSVPYELEPALVRGLDYYVRTAFEVHHEEIGAQSALGGGGRYDGLSELLGGPRVPGVGFAFGVERVALALEAEGFGLPEEKGPDLYLIPLTEEAVAEAFYLAEALRPRLRAEYALAPRKPAKGLEEALKRGAAFAGFLGEDELRAGEVTLKRLATGEQVRLSREEVPGYLLQALG</sequence>
<keyword id="KW-0002">3D-structure</keyword>
<keyword id="KW-0030">Aminoacyl-tRNA synthetase</keyword>
<keyword id="KW-0067">ATP-binding</keyword>
<keyword id="KW-0963">Cytoplasm</keyword>
<keyword id="KW-0436">Ligase</keyword>
<keyword id="KW-0547">Nucleotide-binding</keyword>
<keyword id="KW-0648">Protein biosynthesis</keyword>
<gene>
    <name evidence="1" type="primary">hisS</name>
    <name type="ordered locus">TT_C0360</name>
</gene>
<dbReference type="EC" id="6.1.1.21" evidence="1"/>
<dbReference type="EMBL" id="AE017221">
    <property type="protein sequence ID" value="AAS80708.1"/>
    <property type="molecule type" value="Genomic_DNA"/>
</dbReference>
<dbReference type="RefSeq" id="WP_011172810.1">
    <property type="nucleotide sequence ID" value="NC_005835.1"/>
</dbReference>
<dbReference type="PDB" id="1H4V">
    <property type="method" value="X-ray"/>
    <property type="resolution" value="2.40 A"/>
    <property type="chains" value="B=1-421"/>
</dbReference>
<dbReference type="PDB" id="4RDX">
    <property type="method" value="X-ray"/>
    <property type="resolution" value="2.55 A"/>
    <property type="chains" value="A=1-421"/>
</dbReference>
<dbReference type="PDBsum" id="1H4V"/>
<dbReference type="PDBsum" id="4RDX"/>
<dbReference type="SMR" id="P62374"/>
<dbReference type="GeneID" id="3168691"/>
<dbReference type="KEGG" id="tth:TT_C0360"/>
<dbReference type="eggNOG" id="COG0124">
    <property type="taxonomic scope" value="Bacteria"/>
</dbReference>
<dbReference type="HOGENOM" id="CLU_025113_1_1_0"/>
<dbReference type="OrthoDB" id="9800814at2"/>
<dbReference type="BRENDA" id="6.1.1.21">
    <property type="organism ID" value="2305"/>
</dbReference>
<dbReference type="EvolutionaryTrace" id="P62374"/>
<dbReference type="Proteomes" id="UP000000592">
    <property type="component" value="Chromosome"/>
</dbReference>
<dbReference type="GO" id="GO:0005737">
    <property type="term" value="C:cytoplasm"/>
    <property type="evidence" value="ECO:0007669"/>
    <property type="project" value="UniProtKB-SubCell"/>
</dbReference>
<dbReference type="GO" id="GO:0005524">
    <property type="term" value="F:ATP binding"/>
    <property type="evidence" value="ECO:0007669"/>
    <property type="project" value="UniProtKB-UniRule"/>
</dbReference>
<dbReference type="GO" id="GO:0004821">
    <property type="term" value="F:histidine-tRNA ligase activity"/>
    <property type="evidence" value="ECO:0007669"/>
    <property type="project" value="UniProtKB-UniRule"/>
</dbReference>
<dbReference type="GO" id="GO:0006427">
    <property type="term" value="P:histidyl-tRNA aminoacylation"/>
    <property type="evidence" value="ECO:0007669"/>
    <property type="project" value="UniProtKB-UniRule"/>
</dbReference>
<dbReference type="CDD" id="cd00773">
    <property type="entry name" value="HisRS-like_core"/>
    <property type="match status" value="1"/>
</dbReference>
<dbReference type="Gene3D" id="3.40.50.800">
    <property type="entry name" value="Anticodon-binding domain"/>
    <property type="match status" value="1"/>
</dbReference>
<dbReference type="Gene3D" id="3.30.930.10">
    <property type="entry name" value="Bira Bifunctional Protein, Domain 2"/>
    <property type="match status" value="1"/>
</dbReference>
<dbReference type="HAMAP" id="MF_00127">
    <property type="entry name" value="His_tRNA_synth"/>
    <property type="match status" value="1"/>
</dbReference>
<dbReference type="InterPro" id="IPR006195">
    <property type="entry name" value="aa-tRNA-synth_II"/>
</dbReference>
<dbReference type="InterPro" id="IPR045864">
    <property type="entry name" value="aa-tRNA-synth_II/BPL/LPL"/>
</dbReference>
<dbReference type="InterPro" id="IPR004154">
    <property type="entry name" value="Anticodon-bd"/>
</dbReference>
<dbReference type="InterPro" id="IPR036621">
    <property type="entry name" value="Anticodon-bd_dom_sf"/>
</dbReference>
<dbReference type="InterPro" id="IPR015807">
    <property type="entry name" value="His-tRNA-ligase"/>
</dbReference>
<dbReference type="InterPro" id="IPR041715">
    <property type="entry name" value="HisRS-like_core"/>
</dbReference>
<dbReference type="InterPro" id="IPR004516">
    <property type="entry name" value="HisRS/HisZ"/>
</dbReference>
<dbReference type="NCBIfam" id="TIGR00442">
    <property type="entry name" value="hisS"/>
    <property type="match status" value="1"/>
</dbReference>
<dbReference type="PANTHER" id="PTHR43707:SF1">
    <property type="entry name" value="HISTIDINE--TRNA LIGASE, MITOCHONDRIAL-RELATED"/>
    <property type="match status" value="1"/>
</dbReference>
<dbReference type="PANTHER" id="PTHR43707">
    <property type="entry name" value="HISTIDYL-TRNA SYNTHETASE"/>
    <property type="match status" value="1"/>
</dbReference>
<dbReference type="Pfam" id="PF03129">
    <property type="entry name" value="HGTP_anticodon"/>
    <property type="match status" value="1"/>
</dbReference>
<dbReference type="Pfam" id="PF13393">
    <property type="entry name" value="tRNA-synt_His"/>
    <property type="match status" value="1"/>
</dbReference>
<dbReference type="PIRSF" id="PIRSF001549">
    <property type="entry name" value="His-tRNA_synth"/>
    <property type="match status" value="1"/>
</dbReference>
<dbReference type="SUPFAM" id="SSF52954">
    <property type="entry name" value="Class II aaRS ABD-related"/>
    <property type="match status" value="1"/>
</dbReference>
<dbReference type="SUPFAM" id="SSF55681">
    <property type="entry name" value="Class II aaRS and biotin synthetases"/>
    <property type="match status" value="1"/>
</dbReference>
<dbReference type="PROSITE" id="PS50862">
    <property type="entry name" value="AA_TRNA_LIGASE_II"/>
    <property type="match status" value="1"/>
</dbReference>
<proteinExistence type="evidence at protein level"/>
<protein>
    <recommendedName>
        <fullName evidence="1">Histidine--tRNA ligase</fullName>
        <ecNumber evidence="1">6.1.1.21</ecNumber>
    </recommendedName>
    <alternativeName>
        <fullName evidence="1">Histidyl-tRNA synthetase</fullName>
        <shortName evidence="1">HisRS</shortName>
    </alternativeName>
</protein>
<accession>P62374</accession>
<evidence type="ECO:0000255" key="1">
    <source>
        <dbReference type="HAMAP-Rule" id="MF_00127"/>
    </source>
</evidence>
<evidence type="ECO:0007829" key="2">
    <source>
        <dbReference type="PDB" id="1H4V"/>
    </source>
</evidence>
<feature type="chain" id="PRO_0000136283" description="Histidine--tRNA ligase">
    <location>
        <begin position="1"/>
        <end position="421"/>
    </location>
</feature>
<feature type="helix" evidence="2">
    <location>
        <begin position="14"/>
        <end position="33"/>
    </location>
</feature>
<feature type="strand" evidence="2">
    <location>
        <begin position="43"/>
        <end position="46"/>
    </location>
</feature>
<feature type="helix" evidence="2">
    <location>
        <begin position="47"/>
        <end position="50"/>
    </location>
</feature>
<feature type="strand" evidence="2">
    <location>
        <begin position="67"/>
        <end position="69"/>
    </location>
</feature>
<feature type="strand" evidence="2">
    <location>
        <begin position="75"/>
        <end position="78"/>
    </location>
</feature>
<feature type="helix" evidence="2">
    <location>
        <begin position="83"/>
        <end position="92"/>
    </location>
</feature>
<feature type="helix" evidence="2">
    <location>
        <begin position="95"/>
        <end position="97"/>
    </location>
</feature>
<feature type="strand" evidence="2">
    <location>
        <begin position="98"/>
        <end position="111"/>
    </location>
</feature>
<feature type="strand" evidence="2">
    <location>
        <begin position="123"/>
        <end position="133"/>
    </location>
</feature>
<feature type="helix" evidence="2">
    <location>
        <begin position="137"/>
        <end position="153"/>
    </location>
</feature>
<feature type="strand" evidence="2">
    <location>
        <begin position="160"/>
        <end position="165"/>
    </location>
</feature>
<feature type="helix" evidence="2">
    <location>
        <begin position="169"/>
        <end position="183"/>
    </location>
</feature>
<feature type="helix" evidence="2">
    <location>
        <begin position="184"/>
        <end position="189"/>
    </location>
</feature>
<feature type="helix" evidence="2">
    <location>
        <begin position="192"/>
        <end position="200"/>
    </location>
</feature>
<feature type="helix" evidence="2">
    <location>
        <begin position="202"/>
        <end position="207"/>
    </location>
</feature>
<feature type="helix" evidence="2">
    <location>
        <begin position="211"/>
        <end position="220"/>
    </location>
</feature>
<feature type="helix" evidence="2">
    <location>
        <begin position="225"/>
        <end position="228"/>
    </location>
</feature>
<feature type="helix" evidence="2">
    <location>
        <begin position="231"/>
        <end position="246"/>
    </location>
</feature>
<feature type="strand" evidence="2">
    <location>
        <begin position="251"/>
        <end position="253"/>
    </location>
</feature>
<feature type="strand" evidence="2">
    <location>
        <begin position="265"/>
        <end position="272"/>
    </location>
</feature>
<feature type="strand" evidence="2">
    <location>
        <begin position="281"/>
        <end position="287"/>
    </location>
</feature>
<feature type="helix" evidence="2">
    <location>
        <begin position="291"/>
        <end position="294"/>
    </location>
</feature>
<feature type="strand" evidence="2">
    <location>
        <begin position="302"/>
        <end position="308"/>
    </location>
</feature>
<feature type="helix" evidence="2">
    <location>
        <begin position="309"/>
        <end position="318"/>
    </location>
</feature>
<feature type="strand" evidence="2">
    <location>
        <begin position="330"/>
        <end position="337"/>
    </location>
</feature>
<feature type="helix" evidence="2">
    <location>
        <begin position="338"/>
        <end position="351"/>
    </location>
</feature>
<feature type="turn" evidence="2">
    <location>
        <begin position="352"/>
        <end position="354"/>
    </location>
</feature>
<feature type="strand" evidence="2">
    <location>
        <begin position="357"/>
        <end position="359"/>
    </location>
</feature>
<feature type="helix" evidence="2">
    <location>
        <begin position="366"/>
        <end position="375"/>
    </location>
</feature>
<feature type="strand" evidence="2">
    <location>
        <begin position="379"/>
        <end position="384"/>
    </location>
</feature>
<feature type="helix" evidence="2">
    <location>
        <begin position="386"/>
        <end position="391"/>
    </location>
</feature>
<feature type="strand" evidence="2">
    <location>
        <begin position="393"/>
        <end position="398"/>
    </location>
</feature>
<feature type="turn" evidence="2">
    <location>
        <begin position="399"/>
        <end position="401"/>
    </location>
</feature>
<feature type="strand" evidence="2">
    <location>
        <begin position="404"/>
        <end position="408"/>
    </location>
</feature>
<feature type="helix" evidence="2">
    <location>
        <begin position="409"/>
        <end position="411"/>
    </location>
</feature>
<feature type="helix" evidence="2">
    <location>
        <begin position="412"/>
        <end position="419"/>
    </location>
</feature>
<organism>
    <name type="scientific">Thermus thermophilus (strain ATCC BAA-163 / DSM 7039 / HB27)</name>
    <dbReference type="NCBI Taxonomy" id="262724"/>
    <lineage>
        <taxon>Bacteria</taxon>
        <taxon>Thermotogati</taxon>
        <taxon>Deinococcota</taxon>
        <taxon>Deinococci</taxon>
        <taxon>Thermales</taxon>
        <taxon>Thermaceae</taxon>
        <taxon>Thermus</taxon>
    </lineage>
</organism>
<comment type="catalytic activity">
    <reaction evidence="1">
        <text>tRNA(His) + L-histidine + ATP = L-histidyl-tRNA(His) + AMP + diphosphate + H(+)</text>
        <dbReference type="Rhea" id="RHEA:17313"/>
        <dbReference type="Rhea" id="RHEA-COMP:9665"/>
        <dbReference type="Rhea" id="RHEA-COMP:9689"/>
        <dbReference type="ChEBI" id="CHEBI:15378"/>
        <dbReference type="ChEBI" id="CHEBI:30616"/>
        <dbReference type="ChEBI" id="CHEBI:33019"/>
        <dbReference type="ChEBI" id="CHEBI:57595"/>
        <dbReference type="ChEBI" id="CHEBI:78442"/>
        <dbReference type="ChEBI" id="CHEBI:78527"/>
        <dbReference type="ChEBI" id="CHEBI:456215"/>
        <dbReference type="EC" id="6.1.1.21"/>
    </reaction>
</comment>
<comment type="subunit">
    <text evidence="1">Homodimer.</text>
</comment>
<comment type="subcellular location">
    <subcellularLocation>
        <location evidence="1">Cytoplasm</location>
    </subcellularLocation>
</comment>
<comment type="similarity">
    <text evidence="1">Belongs to the class-II aminoacyl-tRNA synthetase family.</text>
</comment>
<name>SYH_THET2</name>